<proteinExistence type="inferred from homology"/>
<sequence>MKSLVLLLCLAQLWGCHSAPRGLGLIYRQPNCDDPETEEAALVAIDYINQNHPWGYKHTLNQIDEVKVWPRQPSGELFEIEIDTLETTCHVLDPTPVARCSVRQLKEHAVEGDCDFQLLKLDGKFSVVYAKCDSSPDSAEDVRKVCQDCPLLAPLNDTRVVHAAKAALAAFNAQNNGSNFQLEEISRAQLVPLPPSTYVEFTVSGTDCVAKEATEAAKCNLLAEKQYGFCKATLSEKLGGAEVAVTCTVFQTQPVTSQPQPEGANETVPTPVVDPDAPPSPPLGAPGLPPAGSPPDSHVLLAAPPGHQLHWAHYDLRHTFMGVVSLGSPSGEASHPRKTRTVVQPSVGAAAGPVVPPCPGRIRHFKV</sequence>
<keyword id="KW-1015">Disulfide bond</keyword>
<keyword id="KW-0325">Glycoprotein</keyword>
<keyword id="KW-0495">Mineral balance</keyword>
<keyword id="KW-0597">Phosphoprotein</keyword>
<keyword id="KW-1185">Reference proteome</keyword>
<keyword id="KW-0677">Repeat</keyword>
<keyword id="KW-0964">Secreted</keyword>
<keyword id="KW-0732">Signal</keyword>
<name>FETUA_PANTR</name>
<feature type="signal peptide" evidence="1">
    <location>
        <begin position="1"/>
        <end position="18"/>
    </location>
</feature>
<feature type="chain" id="PRO_0000008892" description="Alpha-2-HS-glycoprotein chain A">
    <location>
        <begin position="19"/>
        <end position="300"/>
    </location>
</feature>
<feature type="propeptide" id="PRO_0000008893" description="Connecting peptide">
    <location>
        <begin position="301"/>
        <end position="340"/>
    </location>
</feature>
<feature type="chain" id="PRO_0000008894" description="Alpha-2-HS-glycoprotein chain B">
    <location>
        <begin position="341"/>
        <end position="367"/>
    </location>
</feature>
<feature type="domain" description="Cystatin fetuin-A-type 1" evidence="5">
    <location>
        <begin position="27"/>
        <end position="133"/>
    </location>
</feature>
<feature type="domain" description="Cystatin fetuin-A-type 2" evidence="5">
    <location>
        <begin position="144"/>
        <end position="255"/>
    </location>
</feature>
<feature type="region of interest" description="Disordered" evidence="6">
    <location>
        <begin position="254"/>
        <end position="301"/>
    </location>
</feature>
<feature type="compositionally biased region" description="Pro residues" evidence="6">
    <location>
        <begin position="276"/>
        <end position="293"/>
    </location>
</feature>
<feature type="modified residue" description="Phosphoserine" evidence="2">
    <location>
        <position position="134"/>
    </location>
</feature>
<feature type="modified residue" description="Phosphoserine" evidence="2">
    <location>
        <position position="135"/>
    </location>
</feature>
<feature type="modified residue" description="Phosphoserine" evidence="2">
    <location>
        <position position="138"/>
    </location>
</feature>
<feature type="modified residue" description="Phosphothreonine" evidence="2">
    <location>
        <position position="319"/>
    </location>
</feature>
<feature type="modified residue" description="Phosphoserine" evidence="2">
    <location>
        <position position="325"/>
    </location>
</feature>
<feature type="modified residue" description="Phosphoserine" evidence="2">
    <location>
        <position position="328"/>
    </location>
</feature>
<feature type="modified residue" description="Phosphoserine" evidence="2">
    <location>
        <position position="330"/>
    </location>
</feature>
<feature type="glycosylation site" description="N-linked (GlcNAc...) asparagine" evidence="4">
    <location>
        <position position="156"/>
    </location>
</feature>
<feature type="glycosylation site" description="N-linked (GlcNAc...) asparagine" evidence="4">
    <location>
        <position position="176"/>
    </location>
</feature>
<feature type="glycosylation site" description="N-linked (GlcNAc...) asparagine" evidence="4">
    <location>
        <position position="265"/>
    </location>
</feature>
<feature type="glycosylation site" description="O-linked (GalNAc...) threonine" evidence="3">
    <location>
        <position position="339"/>
    </location>
</feature>
<feature type="disulfide bond" description="Interchain (between A and B chains)" evidence="5">
    <location>
        <begin position="32"/>
        <end position="358"/>
    </location>
</feature>
<feature type="disulfide bond" evidence="5">
    <location>
        <begin position="89"/>
        <end position="100"/>
    </location>
</feature>
<feature type="disulfide bond" evidence="5">
    <location>
        <begin position="114"/>
        <end position="132"/>
    </location>
</feature>
<feature type="disulfide bond" evidence="5">
    <location>
        <begin position="146"/>
        <end position="149"/>
    </location>
</feature>
<feature type="disulfide bond" evidence="5">
    <location>
        <begin position="208"/>
        <end position="219"/>
    </location>
</feature>
<feature type="disulfide bond" evidence="5">
    <location>
        <begin position="230"/>
        <end position="247"/>
    </location>
</feature>
<gene>
    <name type="primary">AHSG</name>
    <name type="synonym">FETUA</name>
</gene>
<comment type="function">
    <text evidence="1">Promotes endocytosis, possesses opsonic properties and influences the mineral phase of bone. Shows affinity for calcium and barium ions (By similarity).</text>
</comment>
<comment type="subunit">
    <text evidence="1">Alpha-2-HS glycoprotein derives from this precursor, when the connecting peptide is cleaved off. The two chains A and B are held together by a single disulfide bond (By similarity).</text>
</comment>
<comment type="subcellular location">
    <subcellularLocation>
        <location>Secreted</location>
    </subcellularLocation>
</comment>
<comment type="PTM">
    <text evidence="2">Phosphorylated by FAM20C in the extracellular medium.</text>
</comment>
<comment type="similarity">
    <text evidence="5">Belongs to the fetuin family.</text>
</comment>
<protein>
    <recommendedName>
        <fullName>Alpha-2-HS-glycoprotein</fullName>
    </recommendedName>
    <alternativeName>
        <fullName>Fetuin-A</fullName>
    </alternativeName>
    <component>
        <recommendedName>
            <fullName>Alpha-2-HS-glycoprotein chain A</fullName>
        </recommendedName>
    </component>
    <component>
        <recommendedName>
            <fullName>Alpha-2-HS-glycoprotein chain B</fullName>
        </recommendedName>
    </component>
</protein>
<accession>Q9N2D0</accession>
<dbReference type="EMBL" id="AB038690">
    <property type="protein sequence ID" value="BAA92190.1"/>
    <property type="molecule type" value="Genomic_DNA"/>
</dbReference>
<dbReference type="RefSeq" id="NP_001009098.1">
    <property type="nucleotide sequence ID" value="NM_001009098.1"/>
</dbReference>
<dbReference type="SMR" id="Q9N2D0"/>
<dbReference type="FunCoup" id="Q9N2D0">
    <property type="interactions" value="776"/>
</dbReference>
<dbReference type="STRING" id="9598.ENSPTRP00000027036"/>
<dbReference type="MEROPS" id="I25.020"/>
<dbReference type="MEROPS" id="I25.021"/>
<dbReference type="GlyCosmos" id="Q9N2D0">
    <property type="glycosylation" value="4 sites, No reported glycans"/>
</dbReference>
<dbReference type="PaxDb" id="9598-ENSPTRP00000027036"/>
<dbReference type="GeneID" id="460912"/>
<dbReference type="KEGG" id="ptr:460912"/>
<dbReference type="CTD" id="197"/>
<dbReference type="eggNOG" id="ENOG502RYRI">
    <property type="taxonomic scope" value="Eukaryota"/>
</dbReference>
<dbReference type="HOGENOM" id="CLU_052519_0_0_1"/>
<dbReference type="InParanoid" id="Q9N2D0"/>
<dbReference type="OrthoDB" id="13225at9604"/>
<dbReference type="TreeFam" id="TF333729"/>
<dbReference type="Proteomes" id="UP000002277">
    <property type="component" value="Unplaced"/>
</dbReference>
<dbReference type="GO" id="GO:0031012">
    <property type="term" value="C:extracellular matrix"/>
    <property type="evidence" value="ECO:0000318"/>
    <property type="project" value="GO_Central"/>
</dbReference>
<dbReference type="GO" id="GO:0005576">
    <property type="term" value="C:extracellular region"/>
    <property type="evidence" value="ECO:0000318"/>
    <property type="project" value="GO_Central"/>
</dbReference>
<dbReference type="GO" id="GO:0005615">
    <property type="term" value="C:extracellular space"/>
    <property type="evidence" value="ECO:0007669"/>
    <property type="project" value="InterPro"/>
</dbReference>
<dbReference type="GO" id="GO:0004869">
    <property type="term" value="F:cysteine-type endopeptidase inhibitor activity"/>
    <property type="evidence" value="ECO:0007669"/>
    <property type="project" value="InterPro"/>
</dbReference>
<dbReference type="GO" id="GO:0004866">
    <property type="term" value="F:endopeptidase inhibitor activity"/>
    <property type="evidence" value="ECO:0000318"/>
    <property type="project" value="GO_Central"/>
</dbReference>
<dbReference type="GO" id="GO:0006953">
    <property type="term" value="P:acute-phase response"/>
    <property type="evidence" value="ECO:0000250"/>
    <property type="project" value="UniProtKB"/>
</dbReference>
<dbReference type="GO" id="GO:0030502">
    <property type="term" value="P:negative regulation of bone mineralization"/>
    <property type="evidence" value="ECO:0000250"/>
    <property type="project" value="UniProtKB"/>
</dbReference>
<dbReference type="GO" id="GO:0050766">
    <property type="term" value="P:positive regulation of phagocytosis"/>
    <property type="evidence" value="ECO:0000250"/>
    <property type="project" value="UniProtKB"/>
</dbReference>
<dbReference type="GO" id="GO:0050727">
    <property type="term" value="P:regulation of inflammatory response"/>
    <property type="evidence" value="ECO:0000250"/>
    <property type="project" value="UniProtKB"/>
</dbReference>
<dbReference type="CDD" id="cd00042">
    <property type="entry name" value="CY"/>
    <property type="match status" value="2"/>
</dbReference>
<dbReference type="FunFam" id="3.10.450.10:FF:000010">
    <property type="entry name" value="Alpha-2-HS-glycoprotein"/>
    <property type="match status" value="1"/>
</dbReference>
<dbReference type="FunFam" id="3.10.450.10:FF:000009">
    <property type="entry name" value="Alpha-2-HS-glycoprotein 2"/>
    <property type="match status" value="1"/>
</dbReference>
<dbReference type="Gene3D" id="3.10.450.10">
    <property type="match status" value="2"/>
</dbReference>
<dbReference type="InterPro" id="IPR000010">
    <property type="entry name" value="Cystatin_dom"/>
</dbReference>
<dbReference type="InterPro" id="IPR025760">
    <property type="entry name" value="Cystatin_Fetuin_A"/>
</dbReference>
<dbReference type="InterPro" id="IPR046350">
    <property type="entry name" value="Cystatin_sf"/>
</dbReference>
<dbReference type="InterPro" id="IPR050735">
    <property type="entry name" value="Kininogen_Fetuin_HRG"/>
</dbReference>
<dbReference type="InterPro" id="IPR001363">
    <property type="entry name" value="Prot_inh_fetuin_CS"/>
</dbReference>
<dbReference type="PANTHER" id="PTHR13814:SF6">
    <property type="entry name" value="ALPHA-2-HS-GLYCOPROTEIN"/>
    <property type="match status" value="1"/>
</dbReference>
<dbReference type="PANTHER" id="PTHR13814">
    <property type="entry name" value="FETUIN"/>
    <property type="match status" value="1"/>
</dbReference>
<dbReference type="Pfam" id="PF00031">
    <property type="entry name" value="Cystatin"/>
    <property type="match status" value="1"/>
</dbReference>
<dbReference type="SMART" id="SM00043">
    <property type="entry name" value="CY"/>
    <property type="match status" value="2"/>
</dbReference>
<dbReference type="SUPFAM" id="SSF54403">
    <property type="entry name" value="Cystatin/monellin"/>
    <property type="match status" value="2"/>
</dbReference>
<dbReference type="PROSITE" id="PS51529">
    <property type="entry name" value="CYSTATIN_FETUIN_A"/>
    <property type="match status" value="2"/>
</dbReference>
<dbReference type="PROSITE" id="PS01254">
    <property type="entry name" value="FETUIN_1"/>
    <property type="match status" value="1"/>
</dbReference>
<dbReference type="PROSITE" id="PS01255">
    <property type="entry name" value="FETUIN_2"/>
    <property type="match status" value="1"/>
</dbReference>
<reference key="1">
    <citation type="journal article" date="2001" name="Ann. Hum. Genet.">
        <title>Haplotype analysis of the human alpha2-HS glycoprotein (fetuin) gene.</title>
        <authorList>
            <person name="Osawa M."/>
            <person name="Yuasa I."/>
            <person name="Kitano T."/>
            <person name="Henke J."/>
            <person name="Kaneko M."/>
            <person name="Udono T."/>
            <person name="Saitou N."/>
            <person name="Umetsu K."/>
        </authorList>
    </citation>
    <scope>NUCLEOTIDE SEQUENCE [GENOMIC DNA]</scope>
</reference>
<organism>
    <name type="scientific">Pan troglodytes</name>
    <name type="common">Chimpanzee</name>
    <dbReference type="NCBI Taxonomy" id="9598"/>
    <lineage>
        <taxon>Eukaryota</taxon>
        <taxon>Metazoa</taxon>
        <taxon>Chordata</taxon>
        <taxon>Craniata</taxon>
        <taxon>Vertebrata</taxon>
        <taxon>Euteleostomi</taxon>
        <taxon>Mammalia</taxon>
        <taxon>Eutheria</taxon>
        <taxon>Euarchontoglires</taxon>
        <taxon>Primates</taxon>
        <taxon>Haplorrhini</taxon>
        <taxon>Catarrhini</taxon>
        <taxon>Hominidae</taxon>
        <taxon>Pan</taxon>
    </lineage>
</organism>
<evidence type="ECO:0000250" key="1"/>
<evidence type="ECO:0000250" key="2">
    <source>
        <dbReference type="UniProtKB" id="P02765"/>
    </source>
</evidence>
<evidence type="ECO:0000250" key="3">
    <source>
        <dbReference type="UniProtKB" id="P12763"/>
    </source>
</evidence>
<evidence type="ECO:0000255" key="4"/>
<evidence type="ECO:0000255" key="5">
    <source>
        <dbReference type="PROSITE-ProRule" id="PRU00861"/>
    </source>
</evidence>
<evidence type="ECO:0000256" key="6">
    <source>
        <dbReference type="SAM" id="MobiDB-lite"/>
    </source>
</evidence>